<organismHost>
    <name type="scientific">Homo sapiens</name>
    <name type="common">Human</name>
    <dbReference type="NCBI Taxonomy" id="9606"/>
</organismHost>
<evidence type="ECO:0000255" key="1">
    <source>
        <dbReference type="HAMAP-Rule" id="MF_04132"/>
    </source>
</evidence>
<evidence type="ECO:0000269" key="2">
    <source>
    </source>
</evidence>
<evidence type="ECO:0000303" key="3">
    <source>
    </source>
</evidence>
<keyword id="KW-0167">Capsid protein</keyword>
<keyword id="KW-0175">Coiled coil</keyword>
<keyword id="KW-1015">Disulfide bond</keyword>
<keyword id="KW-0348">Hemagglutinin</keyword>
<keyword id="KW-1032">Host cell membrane</keyword>
<keyword id="KW-1035">Host cytoplasm</keyword>
<keyword id="KW-1037">Host cytoskeleton</keyword>
<keyword id="KW-1038">Host endoplasmic reticulum</keyword>
<keyword id="KW-1043">Host membrane</keyword>
<keyword id="KW-0945">Host-virus interaction</keyword>
<keyword id="KW-0472">Membrane</keyword>
<keyword id="KW-1152">Outer capsid protein</keyword>
<keyword id="KW-1161">Viral attachment to host cell</keyword>
<keyword id="KW-1162">Viral penetration into host cytoplasm</keyword>
<keyword id="KW-1173">Viral penetration via permeabilization of host membrane</keyword>
<keyword id="KW-0946">Virion</keyword>
<keyword id="KW-1160">Virus entry into host cell</keyword>
<name>VP4_ROTH1</name>
<organism>
    <name type="scientific">Rotavirus A (isolate RVA/Human/Sweden/1076/1983/G2P2A[6])</name>
    <name type="common">RV-A</name>
    <dbReference type="NCBI Taxonomy" id="10944"/>
    <lineage>
        <taxon>Viruses</taxon>
        <taxon>Riboviria</taxon>
        <taxon>Orthornavirae</taxon>
        <taxon>Duplornaviricota</taxon>
        <taxon>Resentoviricetes</taxon>
        <taxon>Reovirales</taxon>
        <taxon>Sedoreoviridae</taxon>
        <taxon>Rotavirus</taxon>
        <taxon>Rotavirus A</taxon>
    </lineage>
</organism>
<feature type="chain" id="PRO_0000041042" description="Outer capsid protein VP4" evidence="1">
    <location>
        <begin position="1"/>
        <end position="775"/>
    </location>
</feature>
<feature type="chain" id="PRO_0000041043" description="Outer capsid protein VP8*" evidence="1">
    <location>
        <begin position="1"/>
        <end position="230"/>
    </location>
</feature>
<feature type="chain" id="PRO_0000041044" description="Outer capsid protein VP5*" evidence="1">
    <location>
        <begin position="247"/>
        <end position="775"/>
    </location>
</feature>
<feature type="region of interest" description="Spike head" evidence="1">
    <location>
        <begin position="65"/>
        <end position="223"/>
    </location>
</feature>
<feature type="region of interest" description="Spike body and stalk (antigen domain)" evidence="1">
    <location>
        <begin position="247"/>
        <end position="478"/>
    </location>
</feature>
<feature type="region of interest" description="Hydrophobic; possible role in virus entry into host cell" evidence="1">
    <location>
        <begin position="388"/>
        <end position="408"/>
    </location>
</feature>
<feature type="region of interest" description="Spike foot" evidence="1">
    <location>
        <begin position="509"/>
        <end position="775"/>
    </location>
</feature>
<feature type="coiled-coil region" evidence="1">
    <location>
        <begin position="483"/>
        <end position="515"/>
    </location>
</feature>
<feature type="short sequence motif" description="DGE motif; interaction with ITGA2/ITGB1 heterodimer" evidence="1">
    <location>
        <begin position="307"/>
        <end position="309"/>
    </location>
</feature>
<feature type="short sequence motif" description="YGL motif; interaction with ITGA4" evidence="1">
    <location>
        <begin position="447"/>
        <end position="449"/>
    </location>
</feature>
<feature type="short sequence motif" description="KID motif; interaction with HSPA8" evidence="1">
    <location>
        <begin position="643"/>
        <end position="645"/>
    </location>
</feature>
<feature type="site" description="Cleavage" evidence="1">
    <location>
        <begin position="230"/>
        <end position="231"/>
    </location>
</feature>
<feature type="site" description="Cleavage" evidence="1">
    <location>
        <begin position="240"/>
        <end position="241"/>
    </location>
</feature>
<feature type="site" description="Cleavage; associated with enhancement of infectivity" evidence="1">
    <location>
        <begin position="246"/>
        <end position="247"/>
    </location>
</feature>
<feature type="disulfide bond" evidence="1">
    <location>
        <begin position="317"/>
        <end position="379"/>
    </location>
</feature>
<comment type="function">
    <molecule>Outer capsid protein VP4</molecule>
    <text evidence="1">Spike-forming protein that mediates virion attachment to the host epithelial cell receptors and plays a major role in cell penetration, determination of host range restriction and virulence. Rotavirus attachment and entry into the host cell probably involves multiple sequential contacts between the outer capsid proteins VP4 and VP7, and the cell receptors. It is subsequently lost, together with VP7, following virus entry into the host cell. Following entry into the host cell, low intracellular or intravesicular Ca(2+) concentration probably causes the calcium-stabilized VP7 trimers to dissociate from the virion. This step is probably necessary for the membrane-disrupting entry step and the release of VP4, which is locked onto the virion by VP7. During the virus exit from the host cell, VP4 seems to be required to target the newly formed virions to the host cell lipid rafts.</text>
</comment>
<comment type="function">
    <molecule>Outer capsid protein VP5*</molecule>
    <text evidence="1">Forms the spike 'foot' and 'body' and acts as a membrane permeabilization protein that mediates release of viral particles from endosomal compartments into the cytoplasm. During entry, the part of VP5* that protrudes from the virus folds back on itself and reorganizes from a local dimer to a trimer. This reorganization may be linked to membrane penetration by exposing VP5* hydrophobic region. In integrin-dependent strains, VP5* targets the integrin heterodimer ITGA2/ITGB1 for cell attachment.</text>
</comment>
<comment type="function">
    <molecule>Outer capsid protein VP8*</molecule>
    <text evidence="1">Forms the head of the spikes and mediates the recognition of specific host cell surface glycans. It is the viral hemagglutinin and an important target of neutralizing antibodies. In sialic acid-dependent strains, VP8* binds to host cell sialic acid, most probably a ganglioside, providing the initial contact. In some other strains, VP8* mediates the attachment to histo-blood group antigens (HBGAs) for viral entry.</text>
</comment>
<comment type="subunit">
    <molecule>Outer capsid protein VP4</molecule>
    <text evidence="1">Homotrimer. VP4 adopts a dimeric appearance above the capsid surface, while forming a trimeric base anchored inside the capsid layer. Only hints of the third molecule are observed above the capsid surface. It probably performs a series of molecular rearrangements during viral entry. Prior to trypsin cleavage, it is flexible. The priming trypsin cleavage triggers its rearrangement into rigid spikes with approximate two-fold symmetry of their protruding parts. After an unknown second triggering event, cleaved VP4 may undergo another rearrangement, in which two VP5* subunits fold back on themselves and join a third subunit to form a tightly associated trimer, shaped like a folded umbrella. Interacts with VP6. Interacts with VP7.</text>
</comment>
<comment type="subunit">
    <molecule>Outer capsid protein VP5*</molecule>
    <text evidence="1">Homotrimer. The trimer is coiled-coil stabilized by its C-terminus, however, its N-terminus, known as antigen domain or 'body', seems to be flexible allowing it to self-associate either as a dimer or a trimer.</text>
</comment>
<comment type="subcellular location">
    <molecule>Outer capsid protein VP4</molecule>
    <subcellularLocation>
        <location evidence="1">Virion</location>
    </subcellularLocation>
    <subcellularLocation>
        <location evidence="1">Host rough endoplasmic reticulum</location>
    </subcellularLocation>
    <subcellularLocation>
        <location evidence="1">Host cell membrane</location>
    </subcellularLocation>
    <subcellularLocation>
        <location evidence="1">Host cytoplasm</location>
        <location evidence="1">Host cytoskeleton</location>
    </subcellularLocation>
    <subcellularLocation>
        <location evidence="1">Host endoplasmic reticulum-Golgi intermediate compartment</location>
    </subcellularLocation>
    <text evidence="1">The outer layer contains 180 copies of VP4, grouped as 60 dimers. Immature double-layered particles assembled in the cytoplasm bud across the membrane of the endoplasmic reticulum, acquiring during this process a transient lipid membrane that is modified with the ER resident viral glycoproteins NSP4 and VP7; these enveloped particles also contain VP4. As the particles move towards the interior of the ER cisternae, the transient lipid membrane and the non-structural protein NSP4 are lost, while the virus surface proteins VP4 and VP7 rearrange to form the outermost virus protein layer, yielding mature infectious triple-layered particles. VP4 also seems to associate with lipid rafts of the host cell membrane probably for the exit of the virus from the infected cell by an alternate pathway.</text>
</comment>
<comment type="subcellular location">
    <molecule>Outer capsid protein VP8*</molecule>
    <subcellularLocation>
        <location evidence="1">Virion</location>
    </subcellularLocation>
    <text evidence="1">Outer capsid protein.</text>
</comment>
<comment type="subcellular location">
    <molecule>Outer capsid protein VP5*</molecule>
    <subcellularLocation>
        <location evidence="1">Virion</location>
    </subcellularLocation>
    <text evidence="1">Outer capsid protein.</text>
</comment>
<comment type="domain">
    <molecule>Outer capsid protein VP4</molecule>
    <text evidence="1">The VP4 spike is divided into a foot, a stalk and body, and a head.</text>
</comment>
<comment type="PTM">
    <molecule>Outer capsid protein VP4</molecule>
    <text evidence="1">Proteolytic cleavage by trypsin results in activation of VP4 functions and greatly increases infectivity. The penetration into the host cell is dependent on trypsin treatment of VP4. It produces two peptides, VP5* and VP8* that remain associated with the virion. Cleavage of VP4 by trypsin probably occurs in vivo in the lumen of the intestine prior to infection of enterocytes. Trypsin seems to be incorporated into the three-layered viral particles but remains inactive as long as the viral outer capsid is intact and would only be activated upon the solubilization of the latter.</text>
</comment>
<comment type="miscellaneous">
    <text evidence="2 3">This strain probably does not use sialic acid to attach to the host cell.</text>
</comment>
<comment type="miscellaneous">
    <text evidence="1">In group A rotaviruses, VP4 defines the P serotype.</text>
</comment>
<comment type="miscellaneous">
    <text evidence="1">Some rotavirus strains are neuraminidase-sensitive and require sialic acid to attach to the cell surface. Some rotavirus strains are integrin-dependent. Some rotavirus strains depend on ganglioside for their entry into the host cell. Hsp70 also seems to be involved in the entry of some strains.</text>
</comment>
<comment type="similarity">
    <text evidence="1">Belongs to the rotavirus VP4 family.</text>
</comment>
<sequence>MASLIYRQLLTNSYTVELSDEINTIGSEKSQNVTINPGPFAQTNYAPVVLESWEVNDSTTIEPVLDGPYQPTSFKPPSDYWILLNPTNQQVVLEGTNKTDIWVALLLVEPNVTNQSRQYTLFGETKQITVENNTNKWKFFEMFRSSVSAEFQHKRTLTSDTKLAGFLKFYNSVWTFYGETPHATTDYSSTSNLSEVETAIHVEFYIIPRSQESKCNEYINTGLPPMQNTRNIVPVALSSRSVTYQRAQVNEDIIISKTSLWKEMQYNRDIIIRFKFNNSIVKLGGLGYKWPEISFKAANYQYNYLRDGEQVMAHTTCSVNGENNYSYNGGLLPTHFSVSRYEVIKENSYVYDNYWDDSQAFRNMVYVRSLAANLNSVKCSGGNYNFQMPVGAWPVMSGGAVSLHFAGVTLSTEFTDFVSLNSLRFRFSLTVEEPPFSILRTRVSGLYGLPAFNPNNGHEYYEIAGRFSFILLVPSNDDYQTPIMNSVTVRQDLERQLGDLREEFNSLSQEIAMTQLIDLALLPLDMFSMFSGIKSTIDAAKSMATMVMKKFKKSGLATSISELTRSLSNAASSVSRSSSIKSNISSISVWTDVSEQITGSSDSVRNISTQTSAISKRLRLREITTQTEGMNFIDISAAVLKTKIDKSTHISPDTLPDIITESSEKFLPKRAYRVLKDDEVMEVDVDGKFFAYKVDTFEEVPFDVDKFVDLVTDSPVISAIIDFKTLKNLNDNYGITRSQALDLIRSDPRVLRDFINQNNPIIKNRIEQLILQCRL</sequence>
<proteinExistence type="inferred from homology"/>
<protein>
    <recommendedName>
        <fullName evidence="1">Outer capsid protein VP4</fullName>
    </recommendedName>
    <alternativeName>
        <fullName evidence="1">Hemagglutinin</fullName>
    </alternativeName>
    <component>
        <recommendedName>
            <fullName evidence="1">Outer capsid protein VP8*</fullName>
        </recommendedName>
    </component>
    <component>
        <recommendedName>
            <fullName evidence="1">Outer capsid protein VP5*</fullName>
        </recommendedName>
    </component>
</protein>
<accession>P11198</accession>
<accession>Q86200</accession>
<dbReference type="EMBL" id="M88480">
    <property type="protein sequence ID" value="AAA47337.1"/>
    <property type="molecule type" value="Genomic_RNA"/>
</dbReference>
<dbReference type="PIR" id="F25904">
    <property type="entry name" value="VPXR16"/>
</dbReference>
<dbReference type="PIR" id="F28839">
    <property type="entry name" value="VPXRW8"/>
</dbReference>
<dbReference type="SMR" id="P11198"/>
<dbReference type="GO" id="GO:0044172">
    <property type="term" value="C:host cell endoplasmic reticulum-Golgi intermediate compartment"/>
    <property type="evidence" value="ECO:0007669"/>
    <property type="project" value="UniProtKB-SubCell"/>
</dbReference>
<dbReference type="GO" id="GO:0020002">
    <property type="term" value="C:host cell plasma membrane"/>
    <property type="evidence" value="ECO:0007669"/>
    <property type="project" value="UniProtKB-SubCell"/>
</dbReference>
<dbReference type="GO" id="GO:0044168">
    <property type="term" value="C:host cell rough endoplasmic reticulum"/>
    <property type="evidence" value="ECO:0007669"/>
    <property type="project" value="UniProtKB-SubCell"/>
</dbReference>
<dbReference type="GO" id="GO:0044163">
    <property type="term" value="C:host cytoskeleton"/>
    <property type="evidence" value="ECO:0007669"/>
    <property type="project" value="UniProtKB-SubCell"/>
</dbReference>
<dbReference type="GO" id="GO:0016020">
    <property type="term" value="C:membrane"/>
    <property type="evidence" value="ECO:0007669"/>
    <property type="project" value="UniProtKB-KW"/>
</dbReference>
<dbReference type="GO" id="GO:0039624">
    <property type="term" value="C:viral outer capsid"/>
    <property type="evidence" value="ECO:0007669"/>
    <property type="project" value="UniProtKB-UniRule"/>
</dbReference>
<dbReference type="GO" id="GO:0039665">
    <property type="term" value="P:permeabilization of host organelle membrane involved in viral entry into host cell"/>
    <property type="evidence" value="ECO:0007669"/>
    <property type="project" value="UniProtKB-UniRule"/>
</dbReference>
<dbReference type="GO" id="GO:0019062">
    <property type="term" value="P:virion attachment to host cell"/>
    <property type="evidence" value="ECO:0007669"/>
    <property type="project" value="UniProtKB-UniRule"/>
</dbReference>
<dbReference type="Gene3D" id="1.20.5.170">
    <property type="match status" value="1"/>
</dbReference>
<dbReference type="Gene3D" id="2.60.120.200">
    <property type="match status" value="1"/>
</dbReference>
<dbReference type="HAMAP" id="MF_04132">
    <property type="entry name" value="Rota_A_VP4"/>
    <property type="match status" value="1"/>
</dbReference>
<dbReference type="HAMAP" id="MF_04125">
    <property type="entry name" value="Rota_VP4"/>
    <property type="match status" value="1"/>
</dbReference>
<dbReference type="InterPro" id="IPR013320">
    <property type="entry name" value="ConA-like_dom_sf"/>
</dbReference>
<dbReference type="InterPro" id="IPR042546">
    <property type="entry name" value="Rota_A_VP4"/>
</dbReference>
<dbReference type="InterPro" id="IPR035330">
    <property type="entry name" value="Rota_VP4_MID"/>
</dbReference>
<dbReference type="InterPro" id="IPR038017">
    <property type="entry name" value="Rota_VP4_MID_sf"/>
</dbReference>
<dbReference type="InterPro" id="IPR000416">
    <property type="entry name" value="VP4_concanavalin-like"/>
</dbReference>
<dbReference type="InterPro" id="IPR035329">
    <property type="entry name" value="VP4_helical"/>
</dbReference>
<dbReference type="Pfam" id="PF17477">
    <property type="entry name" value="Rota_VP4_MID"/>
    <property type="match status" value="1"/>
</dbReference>
<dbReference type="Pfam" id="PF00426">
    <property type="entry name" value="VP4_haemagglut"/>
    <property type="match status" value="1"/>
</dbReference>
<dbReference type="Pfam" id="PF17478">
    <property type="entry name" value="VP4_helical"/>
    <property type="match status" value="1"/>
</dbReference>
<dbReference type="SUPFAM" id="SSF49899">
    <property type="entry name" value="Concanavalin A-like lectins/glucanases"/>
    <property type="match status" value="1"/>
</dbReference>
<dbReference type="SUPFAM" id="SSF111379">
    <property type="entry name" value="VP4 membrane interaction domain"/>
    <property type="match status" value="1"/>
</dbReference>
<reference key="1">
    <citation type="journal article" date="1988" name="J. Virol.">
        <title>Sequence of the fourth gene of human rotaviruses recovered from asymptomatic or symptomatic infections.</title>
        <authorList>
            <person name="Gorziglia M."/>
            <person name="Green K.Y."/>
            <person name="Nishikawa K."/>
            <person name="Taniguchi K."/>
            <person name="Jones R.W."/>
            <person name="Kapikian A.Z."/>
            <person name="Chanock R.M."/>
        </authorList>
    </citation>
    <scope>NUCLEOTIDE SEQUENCE [GENOMIC RNA]</scope>
</reference>
<reference key="2">
    <citation type="journal article" date="1986" name="Proc. Natl. Acad. Sci. U.S.A.">
        <title>Conservation of amino acid sequence of VP8 and cleavage region of 84-kDa outer capsid protein among rotaviruses recovered from asymptomatic neonatal infection.</title>
        <authorList>
            <person name="Gorziglia M."/>
            <person name="Hoshino Y."/>
            <person name="Buckler-White A."/>
            <person name="Blumentals I."/>
            <person name="Glass R."/>
            <person name="Flores J."/>
            <person name="Kapikian A.Z."/>
            <person name="Chanock R.M."/>
        </authorList>
    </citation>
    <scope>NUCLEOTIDE SEQUENCE [GENOMIC RNA] OF 1-280</scope>
</reference>
<reference key="3">
    <citation type="journal article" date="2002" name="J. Virol.">
        <title>Initial interaction of rotavirus strains with N-acetylneuraminic (sialic) acid residues on the cell surface correlates with VP4 genotype, not species of origin.</title>
        <authorList>
            <person name="Ciarlet M."/>
            <person name="Ludert J.E."/>
            <person name="Iturriza-Gomara M."/>
            <person name="Liprandi F."/>
            <person name="Gray J.J."/>
            <person name="Desselberger U."/>
            <person name="Estes M.K."/>
        </authorList>
    </citation>
    <scope>SIALIC ACID INDEPENDENCY</scope>
</reference>
<reference key="4">
    <citation type="journal article" date="2006" name="Glycoconj. J.">
        <title>Role of sialic acids in rotavirus infection.</title>
        <authorList>
            <person name="Isa P."/>
            <person name="Arias C.F."/>
            <person name="Lopez S."/>
        </authorList>
    </citation>
    <scope>REVIEW</scope>
</reference>